<dbReference type="EMBL" id="AB005244">
    <property type="protein sequence ID" value="BAB10064.1"/>
    <property type="status" value="ALT_SEQ"/>
    <property type="molecule type" value="Genomic_DNA"/>
</dbReference>
<dbReference type="EMBL" id="CP002688">
    <property type="protein sequence ID" value="AED93233.1"/>
    <property type="molecule type" value="Genomic_DNA"/>
</dbReference>
<dbReference type="EMBL" id="AK221107">
    <property type="protein sequence ID" value="BAD95010.1"/>
    <property type="molecule type" value="mRNA"/>
</dbReference>
<dbReference type="RefSeq" id="NP_197779.4">
    <property type="nucleotide sequence ID" value="NM_122296.4"/>
</dbReference>
<dbReference type="SMR" id="F4KEC6"/>
<dbReference type="FunCoup" id="F4KEC6">
    <property type="interactions" value="195"/>
</dbReference>
<dbReference type="STRING" id="3702.F4KEC6"/>
<dbReference type="iPTMnet" id="F4KEC6"/>
<dbReference type="PaxDb" id="3702-AT5G23910.1"/>
<dbReference type="EnsemblPlants" id="AT5G23910.1">
    <property type="protein sequence ID" value="AT5G23910.1"/>
    <property type="gene ID" value="AT5G23910"/>
</dbReference>
<dbReference type="GeneID" id="832456"/>
<dbReference type="Gramene" id="AT5G23910.1">
    <property type="protein sequence ID" value="AT5G23910.1"/>
    <property type="gene ID" value="AT5G23910"/>
</dbReference>
<dbReference type="KEGG" id="ath:AT5G23910"/>
<dbReference type="Araport" id="AT5G23910"/>
<dbReference type="TAIR" id="AT5G23910"/>
<dbReference type="eggNOG" id="KOG0239">
    <property type="taxonomic scope" value="Eukaryota"/>
</dbReference>
<dbReference type="eggNOG" id="KOG0242">
    <property type="taxonomic scope" value="Eukaryota"/>
</dbReference>
<dbReference type="HOGENOM" id="CLU_001485_27_2_1"/>
<dbReference type="InParanoid" id="F4KEC6"/>
<dbReference type="OMA" id="CYEEHET"/>
<dbReference type="PRO" id="PR:F4KEC6"/>
<dbReference type="Proteomes" id="UP000006548">
    <property type="component" value="Chromosome 5"/>
</dbReference>
<dbReference type="ExpressionAtlas" id="F4KEC6">
    <property type="expression patterns" value="baseline and differential"/>
</dbReference>
<dbReference type="GO" id="GO:0005874">
    <property type="term" value="C:microtubule"/>
    <property type="evidence" value="ECO:0007669"/>
    <property type="project" value="UniProtKB-KW"/>
</dbReference>
<dbReference type="GO" id="GO:0005524">
    <property type="term" value="F:ATP binding"/>
    <property type="evidence" value="ECO:0007669"/>
    <property type="project" value="UniProtKB-KW"/>
</dbReference>
<dbReference type="GO" id="GO:0008017">
    <property type="term" value="F:microtubule binding"/>
    <property type="evidence" value="ECO:0007669"/>
    <property type="project" value="InterPro"/>
</dbReference>
<dbReference type="GO" id="GO:0003777">
    <property type="term" value="F:microtubule motor activity"/>
    <property type="evidence" value="ECO:0007669"/>
    <property type="project" value="InterPro"/>
</dbReference>
<dbReference type="GO" id="GO:0007018">
    <property type="term" value="P:microtubule-based movement"/>
    <property type="evidence" value="ECO:0007669"/>
    <property type="project" value="InterPro"/>
</dbReference>
<dbReference type="FunFam" id="1.10.150.280:FF:000003">
    <property type="entry name" value="Kinesin-like protein KIN-10C"/>
    <property type="match status" value="1"/>
</dbReference>
<dbReference type="FunFam" id="3.40.850.10:FF:000098">
    <property type="entry name" value="Kinesin-like protein KIN-10C"/>
    <property type="match status" value="1"/>
</dbReference>
<dbReference type="Gene3D" id="1.10.150.280">
    <property type="entry name" value="AF1531-like domain"/>
    <property type="match status" value="1"/>
</dbReference>
<dbReference type="Gene3D" id="3.40.850.10">
    <property type="entry name" value="Kinesin motor domain"/>
    <property type="match status" value="1"/>
</dbReference>
<dbReference type="InterPro" id="IPR027640">
    <property type="entry name" value="Kinesin-like_fam"/>
</dbReference>
<dbReference type="InterPro" id="IPR001752">
    <property type="entry name" value="Kinesin_motor_dom"/>
</dbReference>
<dbReference type="InterPro" id="IPR036961">
    <property type="entry name" value="Kinesin_motor_dom_sf"/>
</dbReference>
<dbReference type="InterPro" id="IPR027417">
    <property type="entry name" value="P-loop_NTPase"/>
</dbReference>
<dbReference type="InterPro" id="IPR010994">
    <property type="entry name" value="RuvA_2-like"/>
</dbReference>
<dbReference type="PANTHER" id="PTHR24115:SF908">
    <property type="entry name" value="KINESIN-LIKE PROTEIN KIN-10C"/>
    <property type="match status" value="1"/>
</dbReference>
<dbReference type="PANTHER" id="PTHR24115">
    <property type="entry name" value="KINESIN-RELATED"/>
    <property type="match status" value="1"/>
</dbReference>
<dbReference type="Pfam" id="PF12836">
    <property type="entry name" value="HHH_3"/>
    <property type="match status" value="1"/>
</dbReference>
<dbReference type="Pfam" id="PF00225">
    <property type="entry name" value="Kinesin"/>
    <property type="match status" value="1"/>
</dbReference>
<dbReference type="PRINTS" id="PR00380">
    <property type="entry name" value="KINESINHEAVY"/>
</dbReference>
<dbReference type="SMART" id="SM00129">
    <property type="entry name" value="KISc"/>
    <property type="match status" value="1"/>
</dbReference>
<dbReference type="SUPFAM" id="SSF52540">
    <property type="entry name" value="P-loop containing nucleoside triphosphate hydrolases"/>
    <property type="match status" value="1"/>
</dbReference>
<dbReference type="SUPFAM" id="SSF47781">
    <property type="entry name" value="RuvA domain 2-like"/>
    <property type="match status" value="1"/>
</dbReference>
<dbReference type="PROSITE" id="PS50067">
    <property type="entry name" value="KINESIN_MOTOR_2"/>
    <property type="match status" value="1"/>
</dbReference>
<keyword id="KW-0067">ATP-binding</keyword>
<keyword id="KW-0493">Microtubule</keyword>
<keyword id="KW-0505">Motor protein</keyword>
<keyword id="KW-0547">Nucleotide-binding</keyword>
<keyword id="KW-1185">Reference proteome</keyword>
<feature type="chain" id="PRO_0000437034" description="Kinesin-like protein KIN-10C">
    <location>
        <begin position="1"/>
        <end position="701"/>
    </location>
</feature>
<feature type="domain" description="Kinesin motor" evidence="1">
    <location>
        <begin position="8"/>
        <end position="318"/>
    </location>
</feature>
<feature type="binding site" evidence="1">
    <location>
        <begin position="94"/>
        <end position="101"/>
    </location>
    <ligand>
        <name>ATP</name>
        <dbReference type="ChEBI" id="CHEBI:30616"/>
    </ligand>
</feature>
<accession>F4KEC6</accession>
<accession>Q56Z62</accession>
<accession>Q9FF89</accession>
<evidence type="ECO:0000255" key="1">
    <source>
        <dbReference type="PROSITE-ProRule" id="PRU00283"/>
    </source>
</evidence>
<evidence type="ECO:0000303" key="2">
    <source>
    </source>
</evidence>
<evidence type="ECO:0000305" key="3"/>
<evidence type="ECO:0000312" key="4">
    <source>
        <dbReference type="Araport" id="AT5G23910"/>
    </source>
</evidence>
<evidence type="ECO:0000312" key="5">
    <source>
        <dbReference type="EMBL" id="BAB10064.1"/>
    </source>
</evidence>
<reference key="1">
    <citation type="journal article" date="1997" name="DNA Res.">
        <title>Structural analysis of Arabidopsis thaliana chromosome 5. I. Sequence features of the 1.6 Mb regions covered by twenty physically assigned P1 clones.</title>
        <authorList>
            <person name="Sato S."/>
            <person name="Kotani H."/>
            <person name="Nakamura Y."/>
            <person name="Kaneko T."/>
            <person name="Asamizu E."/>
            <person name="Fukami M."/>
            <person name="Miyajima N."/>
            <person name="Tabata S."/>
        </authorList>
    </citation>
    <scope>NUCLEOTIDE SEQUENCE [LARGE SCALE GENOMIC DNA]</scope>
    <source>
        <strain>cv. Columbia</strain>
    </source>
</reference>
<reference key="2">
    <citation type="journal article" date="2017" name="Plant J.">
        <title>Araport11: a complete reannotation of the Arabidopsis thaliana reference genome.</title>
        <authorList>
            <person name="Cheng C.Y."/>
            <person name="Krishnakumar V."/>
            <person name="Chan A.P."/>
            <person name="Thibaud-Nissen F."/>
            <person name="Schobel S."/>
            <person name="Town C.D."/>
        </authorList>
    </citation>
    <scope>GENOME REANNOTATION</scope>
    <source>
        <strain>cv. Columbia</strain>
    </source>
</reference>
<reference key="3">
    <citation type="submission" date="2005-03" db="EMBL/GenBank/DDBJ databases">
        <title>Large-scale analysis of RIKEN Arabidopsis full-length (RAFL) cDNAs.</title>
        <authorList>
            <person name="Totoki Y."/>
            <person name="Seki M."/>
            <person name="Ishida J."/>
            <person name="Nakajima M."/>
            <person name="Enju A."/>
            <person name="Kamiya A."/>
            <person name="Narusaka M."/>
            <person name="Shin-i T."/>
            <person name="Nakagawa M."/>
            <person name="Sakamoto N."/>
            <person name="Oishi K."/>
            <person name="Kohara Y."/>
            <person name="Kobayashi M."/>
            <person name="Toyoda A."/>
            <person name="Sakaki Y."/>
            <person name="Sakurai T."/>
            <person name="Iida K."/>
            <person name="Akiyama K."/>
            <person name="Satou M."/>
            <person name="Toyoda T."/>
            <person name="Konagaya A."/>
            <person name="Carninci P."/>
            <person name="Kawai J."/>
            <person name="Hayashizaki Y."/>
            <person name="Shinozaki K."/>
        </authorList>
    </citation>
    <scope>NUCLEOTIDE SEQUENCE [LARGE SCALE MRNA] OF 655-701</scope>
    <source>
        <strain>cv. Columbia</strain>
    </source>
</reference>
<reference key="4">
    <citation type="journal article" date="2001" name="BMC Genomics">
        <title>Kinesins in the Arabidopsis genome: a comparative analysis among eukaryotes.</title>
        <authorList>
            <person name="Reddy A.S."/>
            <person name="Day I.S."/>
        </authorList>
    </citation>
    <scope>GENE FAMILY</scope>
</reference>
<reference key="5">
    <citation type="journal article" date="2006" name="BMC Genomics">
        <title>Comprehensive comparative analysis of kinesins in photosynthetic eukaryotes.</title>
        <authorList>
            <person name="Richardson D.N."/>
            <person name="Simmons M.P."/>
            <person name="Reddy A.S."/>
        </authorList>
    </citation>
    <scope>GENE FAMILY</scope>
    <scope>NOMENCLATURE</scope>
</reference>
<reference key="6">
    <citation type="journal article" date="2012" name="Protoplasma">
        <title>Functions of the Arabidopsis kinesin superfamily of microtubule-based motor proteins.</title>
        <authorList>
            <person name="Zhu C."/>
            <person name="Dixit R."/>
        </authorList>
    </citation>
    <scope>REVIEW</scope>
</reference>
<organism>
    <name type="scientific">Arabidopsis thaliana</name>
    <name type="common">Mouse-ear cress</name>
    <dbReference type="NCBI Taxonomy" id="3702"/>
    <lineage>
        <taxon>Eukaryota</taxon>
        <taxon>Viridiplantae</taxon>
        <taxon>Streptophyta</taxon>
        <taxon>Embryophyta</taxon>
        <taxon>Tracheophyta</taxon>
        <taxon>Spermatophyta</taxon>
        <taxon>Magnoliopsida</taxon>
        <taxon>eudicotyledons</taxon>
        <taxon>Gunneridae</taxon>
        <taxon>Pentapetalae</taxon>
        <taxon>rosids</taxon>
        <taxon>malvids</taxon>
        <taxon>Brassicales</taxon>
        <taxon>Brassicaceae</taxon>
        <taxon>Camelineae</taxon>
        <taxon>Arabidopsis</taxon>
    </lineage>
</organism>
<sequence length="701" mass="76884">MTSHGRKVVRVVARVKPSTDLASTKSISVQKPMGDDSETVTISFGAQFAGSKDSYRLDYCYEENETTGSILTKEIKPLISTVFEGKDANVIAHGARNSGKTHLIQGNERELGLAVLTMSEMLSMAEERGDAIFVSVYEVSQETVYDLLDQEKRVVSVLEGAQGKIQLKGLSQVPVKSLSEFQNLYFGFKKSQKLTSDLPTRSHKGVMIHVTTGNANSGSLGRMNFLDMAGYEDSRKQNSALGPLEIARVNKSIYALQNVMYALNANESHVPYRESKLTRMLKDCLKGSNITLLITCLPREFSQDSFYMLNLASRICLGGNRAITNPTKKKINGLDRSVSLSSAAQRRQTPLTMSAASRKQTVLRGNVTERKTKINTATSAIKARKLFGEANDSVKCKNSSKKVEGKAKMVLKKGISTSKVVLSVQASSPKEEICSSITVTDFQSSLVEEEYSLAFSSSTVAMEPGYSNGASLSSEAIYTTDKETPRKQEEMFAGATHCDDAFVDKAQIVERDENNSVIEEDLTLVIDEGENLDKENNSLLANETASPPLSMRLQELSNNLKSICKFSNQLSVPEKHQTPLTILQAEEASEHSDITAEAAVSIELRTPEKTMPSNIGCSPWKTYSAHSSKLKNSAVGEYLKFINTAGKEDLKKLKGIGDKRAAYIVELREESPFKTLDDLQSIGLSAKQVNGLLKKEIGEIF</sequence>
<name>KN10C_ARATH</name>
<protein>
    <recommendedName>
        <fullName evidence="3">Kinesin-like protein KIN-10C</fullName>
    </recommendedName>
</protein>
<comment type="similarity">
    <text evidence="2">Belongs to the TRAFAC class myosin-kinesin ATPase superfamily. Kinesin family. KIN-10 subfamily.</text>
</comment>
<comment type="sequence caution" evidence="3">
    <conflict type="erroneous gene model prediction">
        <sequence resource="EMBL-CDS" id="BAB10064"/>
    </conflict>
</comment>
<proteinExistence type="evidence at transcript level"/>
<gene>
    <name evidence="3" type="primary">KIN10C</name>
    <name evidence="4" type="ordered locus">At5g23910</name>
    <name evidence="5" type="ORF">MRO11.5</name>
</gene>